<sequence length="15" mass="1553">ELVTLSGAHTIGQAR</sequence>
<proteinExistence type="evidence at protein level"/>
<evidence type="ECO:0000250" key="1">
    <source>
        <dbReference type="UniProtKB" id="P84516"/>
    </source>
</evidence>
<evidence type="ECO:0000250" key="2">
    <source>
        <dbReference type="UniProtKB" id="Q39034"/>
    </source>
</evidence>
<evidence type="ECO:0000255" key="3">
    <source>
        <dbReference type="PROSITE-ProRule" id="PRU00297"/>
    </source>
</evidence>
<evidence type="ECO:0000269" key="4">
    <source>
    </source>
</evidence>
<evidence type="ECO:0000303" key="5">
    <source>
    </source>
</evidence>
<evidence type="ECO:0000305" key="6"/>
<organism>
    <name type="scientific">Cycas revoluta</name>
    <name type="common">Sago palm</name>
    <dbReference type="NCBI Taxonomy" id="3396"/>
    <lineage>
        <taxon>Eukaryota</taxon>
        <taxon>Viridiplantae</taxon>
        <taxon>Streptophyta</taxon>
        <taxon>Embryophyta</taxon>
        <taxon>Tracheophyta</taxon>
        <taxon>Spermatophyta</taxon>
        <taxon>Cycadidae</taxon>
        <taxon>Cycadales</taxon>
        <taxon>Cycadaceae</taxon>
        <taxon>Cycas</taxon>
    </lineage>
</organism>
<dbReference type="EC" id="1.11.1.7"/>
<dbReference type="GO" id="GO:0005576">
    <property type="term" value="C:extracellular region"/>
    <property type="evidence" value="ECO:0007669"/>
    <property type="project" value="UniProtKB-SubCell"/>
</dbReference>
<dbReference type="GO" id="GO:0020037">
    <property type="term" value="F:heme binding"/>
    <property type="evidence" value="ECO:0007669"/>
    <property type="project" value="InterPro"/>
</dbReference>
<dbReference type="GO" id="GO:0140825">
    <property type="term" value="F:lactoperoxidase activity"/>
    <property type="evidence" value="ECO:0007669"/>
    <property type="project" value="UniProtKB-EC"/>
</dbReference>
<dbReference type="GO" id="GO:0046872">
    <property type="term" value="F:metal ion binding"/>
    <property type="evidence" value="ECO:0007669"/>
    <property type="project" value="UniProtKB-KW"/>
</dbReference>
<dbReference type="GO" id="GO:0042744">
    <property type="term" value="P:hydrogen peroxide catabolic process"/>
    <property type="evidence" value="ECO:0007669"/>
    <property type="project" value="UniProtKB-KW"/>
</dbReference>
<dbReference type="GO" id="GO:0006979">
    <property type="term" value="P:response to oxidative stress"/>
    <property type="evidence" value="ECO:0007669"/>
    <property type="project" value="InterPro"/>
</dbReference>
<dbReference type="InterPro" id="IPR010255">
    <property type="entry name" value="Haem_peroxidase_sf"/>
</dbReference>
<dbReference type="InterPro" id="IPR019793">
    <property type="entry name" value="Peroxidases_heam-ligand_BS"/>
</dbReference>
<dbReference type="SUPFAM" id="SSF48113">
    <property type="entry name" value="Heme-dependent peroxidases"/>
    <property type="match status" value="1"/>
</dbReference>
<dbReference type="PROSITE" id="PS00435">
    <property type="entry name" value="PEROXIDASE_1"/>
    <property type="match status" value="1"/>
</dbReference>
<feature type="chain" id="PRO_0000320215" description="Peroxidase 8">
    <location>
        <begin position="1" status="less than"/>
        <end position="15" status="greater than"/>
    </location>
</feature>
<feature type="binding site" description="axial binding residue" evidence="2 3">
    <location>
        <position position="9"/>
    </location>
    <ligand>
        <name>heme</name>
        <dbReference type="ChEBI" id="CHEBI:30413"/>
    </ligand>
    <ligandPart>
        <name>Fe</name>
        <dbReference type="ChEBI" id="CHEBI:18248"/>
    </ligandPart>
</feature>
<feature type="binding site" evidence="2 3">
    <location>
        <position position="10"/>
    </location>
    <ligand>
        <name>Ca(2+)</name>
        <dbReference type="ChEBI" id="CHEBI:29108"/>
        <label>2</label>
    </ligand>
</feature>
<feature type="non-terminal residue" evidence="5">
    <location>
        <position position="1"/>
    </location>
</feature>
<feature type="non-terminal residue" evidence="5">
    <location>
        <position position="15"/>
    </location>
</feature>
<name>PER8_CYCRE</name>
<accession>P85434</accession>
<keyword id="KW-0106">Calcium</keyword>
<keyword id="KW-0134">Cell wall</keyword>
<keyword id="KW-0903">Direct protein sequencing</keyword>
<keyword id="KW-0349">Heme</keyword>
<keyword id="KW-0376">Hydrogen peroxide</keyword>
<keyword id="KW-0408">Iron</keyword>
<keyword id="KW-0479">Metal-binding</keyword>
<keyword id="KW-0560">Oxidoreductase</keyword>
<keyword id="KW-0575">Peroxidase</keyword>
<keyword id="KW-0964">Secreted</keyword>
<protein>
    <recommendedName>
        <fullName>Peroxidase 8</fullName>
        <ecNumber>1.11.1.7</ecNumber>
    </recommendedName>
</protein>
<comment type="function">
    <text evidence="6">Removal of H(2)O(2), oxidation of toxic reductants, biosynthesis and degradation of lignin, suberization, auxin catabolism, response to environmental stresses such as wounding, pathogen attack and oxidative stress. These functions might be dependent on each isozyme/isoform in each plant tissue.</text>
</comment>
<comment type="catalytic activity">
    <reaction>
        <text>2 a phenolic donor + H2O2 = 2 a phenolic radical donor + 2 H2O</text>
        <dbReference type="Rhea" id="RHEA:56136"/>
        <dbReference type="ChEBI" id="CHEBI:15377"/>
        <dbReference type="ChEBI" id="CHEBI:16240"/>
        <dbReference type="ChEBI" id="CHEBI:139520"/>
        <dbReference type="ChEBI" id="CHEBI:139521"/>
        <dbReference type="EC" id="1.11.1.7"/>
    </reaction>
</comment>
<comment type="cofactor">
    <cofactor evidence="2 3">
        <name>heme b</name>
        <dbReference type="ChEBI" id="CHEBI:60344"/>
    </cofactor>
    <text evidence="2 3">Binds 1 heme b (iron(II)-protoporphyrin IX) group per subunit.</text>
</comment>
<comment type="cofactor">
    <cofactor evidence="2 3">
        <name>Ca(2+)</name>
        <dbReference type="ChEBI" id="CHEBI:29108"/>
    </cofactor>
    <text evidence="2 3">Binds 2 calcium ions per subunit.</text>
</comment>
<comment type="subcellular location">
    <subcellularLocation>
        <location evidence="1 3">Secreted</location>
    </subcellularLocation>
    <subcellularLocation>
        <location evidence="4">Secreted</location>
        <location evidence="4">Cell wall</location>
    </subcellularLocation>
</comment>
<comment type="similarity">
    <text evidence="3">Belongs to the peroxidase family. Classical plant (class III) peroxidase subfamily.</text>
</comment>
<reference evidence="6" key="1">
    <citation type="journal article" date="2009" name="J. Plant Physiol.">
        <title>Analysis of the soluble cell wall proteome of gymnosperms.</title>
        <authorList>
            <person name="Uzal E.N."/>
            <person name="Gomez-Ros L.V."/>
            <person name="Hernandez J.A."/>
            <person name="Pedreno M.A."/>
            <person name="Cuello J."/>
            <person name="Ros Barcelo A."/>
        </authorList>
    </citation>
    <scope>PROTEIN SEQUENCE</scope>
    <scope>SUBCELLULAR LOCATION</scope>
    <source>
        <tissue evidence="4">Callus</tissue>
    </source>
</reference>